<proteinExistence type="evidence at protein level"/>
<comment type="function">
    <text>Actins are highly conserved proteins that are involved in various types of cell motility and are ubiquitously expressed in all eukaryotic cells.</text>
</comment>
<comment type="catalytic activity">
    <reaction evidence="5">
        <text>ATP + H2O = ADP + phosphate + H(+)</text>
        <dbReference type="Rhea" id="RHEA:13065"/>
        <dbReference type="ChEBI" id="CHEBI:15377"/>
        <dbReference type="ChEBI" id="CHEBI:15378"/>
        <dbReference type="ChEBI" id="CHEBI:30616"/>
        <dbReference type="ChEBI" id="CHEBI:43474"/>
        <dbReference type="ChEBI" id="CHEBI:456216"/>
    </reaction>
</comment>
<comment type="subunit">
    <text>Polymerization of globular actin (G-actin) leads to a structural filament (F-actin) in the form of a two-stranded helix. Each actin can bind to 4 others.</text>
</comment>
<comment type="subcellular location">
    <subcellularLocation>
        <location>Cytoplasm</location>
        <location>Cytoskeleton</location>
    </subcellularLocation>
</comment>
<comment type="PTM">
    <molecule>Actin, gamma-enteric smooth muscle, intermediate form</molecule>
    <text evidence="1">N-terminal cleavage of acetylated cysteine of intermediate muscle actin by ACTMAP.</text>
</comment>
<comment type="PTM">
    <text evidence="3">Oxidation of Met-45 and Met-48 by MICALs (MICAL1, MICAL2 or MICAL3) to form methionine sulfoxide promotes actin filament depolymerization. MICAL1 and MICAL2 produce the (R)-S-oxide form. The (R)-S-oxide form is reverted by MSRB1 and MSRB2, which promotes actin repolymerization.</text>
</comment>
<comment type="PTM">
    <text evidence="4">Monomethylation at Lys-85 (K85me1) regulates actin-myosin interaction and actomyosin-dependent processes. Demethylation by ALKBH4 is required for maintaining actomyosin dynamics supporting normal cleavage furrow ingression during cytokinesis and cell migration.</text>
</comment>
<comment type="PTM">
    <text evidence="2">Methylated at His-74 by SETD3.</text>
</comment>
<comment type="miscellaneous">
    <text>In vertebrates 3 main groups of actin isoforms, alpha, beta and gamma have been identified. The alpha actins are found in muscle tissues and are a major constituent of the contractile apparatus. The beta and gamma actins coexist in most cell types as components of the cytoskeleton and as mediators of internal cell motility.</text>
</comment>
<comment type="similarity">
    <text evidence="7">Belongs to the actin family.</text>
</comment>
<gene>
    <name type="primary">ACTG2</name>
    <name type="synonym">ACTA3</name>
    <name type="synonym">ACTSG</name>
</gene>
<accession>P63270</accession>
<accession>O73680</accession>
<accession>P12718</accession>
<protein>
    <recommendedName>
        <fullName>Actin, gamma-enteric smooth muscle</fullName>
        <ecNumber evidence="5">3.6.4.-</ecNumber>
    </recommendedName>
    <alternativeName>
        <fullName>Alpha-actin-3</fullName>
    </alternativeName>
    <alternativeName>
        <fullName>Gamma-2-actin</fullName>
    </alternativeName>
    <alternativeName>
        <fullName>Smooth muscle gamma-actin</fullName>
    </alternativeName>
    <component>
        <recommendedName>
            <fullName>Actin, gamma-enteric smooth muscle, intermediate form</fullName>
        </recommendedName>
    </component>
</protein>
<organism>
    <name type="scientific">Gallus gallus</name>
    <name type="common">Chicken</name>
    <dbReference type="NCBI Taxonomy" id="9031"/>
    <lineage>
        <taxon>Eukaryota</taxon>
        <taxon>Metazoa</taxon>
        <taxon>Chordata</taxon>
        <taxon>Craniata</taxon>
        <taxon>Vertebrata</taxon>
        <taxon>Euteleostomi</taxon>
        <taxon>Archelosauria</taxon>
        <taxon>Archosauria</taxon>
        <taxon>Dinosauria</taxon>
        <taxon>Saurischia</taxon>
        <taxon>Theropoda</taxon>
        <taxon>Coelurosauria</taxon>
        <taxon>Aves</taxon>
        <taxon>Neognathae</taxon>
        <taxon>Galloanserae</taxon>
        <taxon>Galliformes</taxon>
        <taxon>Phasianidae</taxon>
        <taxon>Phasianinae</taxon>
        <taxon>Gallus</taxon>
    </lineage>
</organism>
<sequence>MCEEETTALVCDNGSGLCKAGFAGDDAPRAVFPSIVGRPRHQGVMVGMGQKDSYVGDEAQSKRGILTLKYPIEHGIITNWDDMEKIWHHSFYNELRVAPEEHPTLLTEAPLNPKANREKMTQIMFETFNVPAMYVAIQAVLSLYASGRTTGIVLDSGDGVTHNVPIYEGYALPHAIMRLDLAGRDLTDYLMKILTERGYSFVTTAEREIVRDIKEKLCYVALDFENEMATAASSSSLEKSYELPDGQVITIGNERFRCPETLFQPSFIGMESAGIHETTYNSIMKCDIDIRKDLYANNVLSGGTTMYPGIADRMQKEITALAPSTMKIKIIAPPERKYSVWIGGSILASLSTFQQMWISKPEYDEAGPSIVHRKCF</sequence>
<dbReference type="EC" id="3.6.4.-" evidence="5"/>
<dbReference type="EMBL" id="S63494">
    <property type="protein sequence ID" value="AAB27386.1"/>
    <property type="molecule type" value="mRNA"/>
</dbReference>
<dbReference type="EMBL" id="AF012348">
    <property type="protein sequence ID" value="AAC05823.1"/>
    <property type="molecule type" value="Genomic_DNA"/>
</dbReference>
<dbReference type="PIR" id="I51208">
    <property type="entry name" value="ATCHSM"/>
</dbReference>
<dbReference type="RefSeq" id="NP_990503.1">
    <property type="nucleotide sequence ID" value="NM_205172.2"/>
</dbReference>
<dbReference type="PDB" id="3W3D">
    <property type="method" value="X-ray"/>
    <property type="resolution" value="1.80 A"/>
    <property type="chains" value="A=3-376"/>
</dbReference>
<dbReference type="PDBsum" id="3W3D"/>
<dbReference type="SMR" id="P63270"/>
<dbReference type="BioGRID" id="676350">
    <property type="interactions" value="1"/>
</dbReference>
<dbReference type="FunCoup" id="P63270">
    <property type="interactions" value="237"/>
</dbReference>
<dbReference type="Ensembl" id="ENSGALT00010049751.1">
    <property type="protein sequence ID" value="ENSGALP00010029396.1"/>
    <property type="gene ID" value="ENSGALG00010020613.1"/>
</dbReference>
<dbReference type="GeneID" id="396084"/>
<dbReference type="KEGG" id="gga:396084"/>
<dbReference type="CTD" id="72"/>
<dbReference type="VEuPathDB" id="HostDB:geneid_396084"/>
<dbReference type="GeneTree" id="ENSGT00940000154148"/>
<dbReference type="InParanoid" id="P63270"/>
<dbReference type="OMA" id="PXEREIV"/>
<dbReference type="OrthoDB" id="9092295at2759"/>
<dbReference type="Reactome" id="R-GGA-445355">
    <property type="pathway name" value="Smooth Muscle Contraction"/>
</dbReference>
<dbReference type="EvolutionaryTrace" id="P63270"/>
<dbReference type="PRO" id="PR:P63270"/>
<dbReference type="Proteomes" id="UP000000539">
    <property type="component" value="Chromosome 22"/>
</dbReference>
<dbReference type="Bgee" id="ENSGALG00000041634">
    <property type="expression patterns" value="Expressed in colon and 12 other cell types or tissues"/>
</dbReference>
<dbReference type="GO" id="GO:0015629">
    <property type="term" value="C:actin cytoskeleton"/>
    <property type="evidence" value="ECO:0000318"/>
    <property type="project" value="GO_Central"/>
</dbReference>
<dbReference type="GO" id="GO:0071944">
    <property type="term" value="C:cell periphery"/>
    <property type="evidence" value="ECO:0007669"/>
    <property type="project" value="Ensembl"/>
</dbReference>
<dbReference type="GO" id="GO:0005737">
    <property type="term" value="C:cytoplasm"/>
    <property type="evidence" value="ECO:0007669"/>
    <property type="project" value="UniProtKB-KW"/>
</dbReference>
<dbReference type="GO" id="GO:0005524">
    <property type="term" value="F:ATP binding"/>
    <property type="evidence" value="ECO:0007669"/>
    <property type="project" value="UniProtKB-KW"/>
</dbReference>
<dbReference type="GO" id="GO:0016787">
    <property type="term" value="F:hydrolase activity"/>
    <property type="evidence" value="ECO:0007669"/>
    <property type="project" value="UniProtKB-KW"/>
</dbReference>
<dbReference type="CDD" id="cd10224">
    <property type="entry name" value="ASKHA_NBD_actin"/>
    <property type="match status" value="1"/>
</dbReference>
<dbReference type="FunFam" id="2.30.36.70:FF:000001">
    <property type="entry name" value="Actin, alpha skeletal muscle"/>
    <property type="match status" value="1"/>
</dbReference>
<dbReference type="FunFam" id="3.30.420.40:FF:000131">
    <property type="entry name" value="Actin, alpha skeletal muscle"/>
    <property type="match status" value="1"/>
</dbReference>
<dbReference type="FunFam" id="3.30.420.40:FF:000291">
    <property type="entry name" value="Actin, alpha skeletal muscle"/>
    <property type="match status" value="1"/>
</dbReference>
<dbReference type="FunFam" id="3.90.640.10:FF:000047">
    <property type="entry name" value="Actin, alpha skeletal muscle"/>
    <property type="match status" value="1"/>
</dbReference>
<dbReference type="FunFam" id="3.30.420.40:FF:000058">
    <property type="entry name" value="Putative actin-related protein 5"/>
    <property type="match status" value="1"/>
</dbReference>
<dbReference type="Gene3D" id="3.30.420.40">
    <property type="match status" value="2"/>
</dbReference>
<dbReference type="Gene3D" id="3.90.640.10">
    <property type="entry name" value="Actin, Chain A, domain 4"/>
    <property type="match status" value="1"/>
</dbReference>
<dbReference type="InterPro" id="IPR004000">
    <property type="entry name" value="Actin"/>
</dbReference>
<dbReference type="InterPro" id="IPR020902">
    <property type="entry name" value="Actin/actin-like_CS"/>
</dbReference>
<dbReference type="InterPro" id="IPR004001">
    <property type="entry name" value="Actin_CS"/>
</dbReference>
<dbReference type="InterPro" id="IPR043129">
    <property type="entry name" value="ATPase_NBD"/>
</dbReference>
<dbReference type="PANTHER" id="PTHR11937">
    <property type="entry name" value="ACTIN"/>
    <property type="match status" value="1"/>
</dbReference>
<dbReference type="Pfam" id="PF00022">
    <property type="entry name" value="Actin"/>
    <property type="match status" value="1"/>
</dbReference>
<dbReference type="PRINTS" id="PR00190">
    <property type="entry name" value="ACTIN"/>
</dbReference>
<dbReference type="SMART" id="SM00268">
    <property type="entry name" value="ACTIN"/>
    <property type="match status" value="1"/>
</dbReference>
<dbReference type="SUPFAM" id="SSF53067">
    <property type="entry name" value="Actin-like ATPase domain"/>
    <property type="match status" value="2"/>
</dbReference>
<dbReference type="PROSITE" id="PS00406">
    <property type="entry name" value="ACTINS_1"/>
    <property type="match status" value="1"/>
</dbReference>
<dbReference type="PROSITE" id="PS00432">
    <property type="entry name" value="ACTINS_2"/>
    <property type="match status" value="1"/>
</dbReference>
<dbReference type="PROSITE" id="PS01132">
    <property type="entry name" value="ACTINS_ACT_LIKE"/>
    <property type="match status" value="1"/>
</dbReference>
<feature type="initiator methionine" description="Removed">
    <location>
        <position position="1"/>
    </location>
</feature>
<feature type="chain" id="PRO_0000442955" description="Actin, gamma-enteric smooth muscle, intermediate form" evidence="1">
    <location>
        <begin position="2"/>
        <end position="376"/>
    </location>
</feature>
<feature type="chain" id="PRO_0000442956" description="Actin, gamma-enteric smooth muscle" evidence="2">
    <location>
        <begin position="3"/>
        <end position="376"/>
    </location>
</feature>
<feature type="modified residue" description="N-acetylcysteine; in intermediate form" evidence="1">
    <location>
        <position position="2"/>
    </location>
</feature>
<feature type="modified residue" description="N-acetylglutamate; in Actin, gamma-enteric smooth muscle" evidence="2">
    <location>
        <position position="3"/>
    </location>
</feature>
<feature type="modified residue" description="Methionine (R)-sulfoxide" evidence="3">
    <location>
        <position position="45"/>
    </location>
</feature>
<feature type="modified residue" description="Methionine (R)-sulfoxide" evidence="3">
    <location>
        <position position="48"/>
    </location>
</feature>
<feature type="modified residue" description="Tele-methylhistidine" evidence="6 8">
    <location>
        <position position="74"/>
    </location>
</feature>
<feature type="modified residue" description="N6-methyllysine" evidence="4">
    <location>
        <position position="85"/>
    </location>
</feature>
<feature type="sequence conflict" description="In Ref. 2; AAC05823." evidence="7" ref="2">
    <original>A</original>
    <variation>P</variation>
    <location>
        <position position="221"/>
    </location>
</feature>
<feature type="strand" evidence="9">
    <location>
        <begin position="9"/>
        <end position="13"/>
    </location>
</feature>
<feature type="strand" evidence="9">
    <location>
        <begin position="15"/>
        <end position="22"/>
    </location>
</feature>
<feature type="strand" evidence="9">
    <location>
        <begin position="29"/>
        <end position="33"/>
    </location>
</feature>
<feature type="strand" evidence="9">
    <location>
        <begin position="36"/>
        <end position="41"/>
    </location>
</feature>
<feature type="strand" evidence="9">
    <location>
        <begin position="43"/>
        <end position="45"/>
    </location>
</feature>
<feature type="strand" evidence="9">
    <location>
        <begin position="54"/>
        <end position="56"/>
    </location>
</feature>
<feature type="helix" evidence="9">
    <location>
        <begin position="57"/>
        <end position="61"/>
    </location>
</feature>
<feature type="helix" evidence="9">
    <location>
        <begin position="63"/>
        <end position="65"/>
    </location>
</feature>
<feature type="strand" evidence="9">
    <location>
        <begin position="66"/>
        <end position="69"/>
    </location>
</feature>
<feature type="helix" evidence="9">
    <location>
        <begin position="80"/>
        <end position="92"/>
    </location>
</feature>
<feature type="turn" evidence="9">
    <location>
        <begin position="93"/>
        <end position="95"/>
    </location>
</feature>
<feature type="helix" evidence="9">
    <location>
        <begin position="99"/>
        <end position="101"/>
    </location>
</feature>
<feature type="strand" evidence="9">
    <location>
        <begin position="104"/>
        <end position="108"/>
    </location>
</feature>
<feature type="helix" evidence="9">
    <location>
        <begin position="114"/>
        <end position="126"/>
    </location>
</feature>
<feature type="strand" evidence="9">
    <location>
        <begin position="131"/>
        <end position="137"/>
    </location>
</feature>
<feature type="helix" evidence="9">
    <location>
        <begin position="138"/>
        <end position="145"/>
    </location>
</feature>
<feature type="strand" evidence="9">
    <location>
        <begin position="151"/>
        <end position="156"/>
    </location>
</feature>
<feature type="strand" evidence="9">
    <location>
        <begin position="161"/>
        <end position="167"/>
    </location>
</feature>
<feature type="helix" evidence="9">
    <location>
        <begin position="173"/>
        <end position="175"/>
    </location>
</feature>
<feature type="strand" evidence="9">
    <location>
        <begin position="177"/>
        <end position="179"/>
    </location>
</feature>
<feature type="helix" evidence="9">
    <location>
        <begin position="183"/>
        <end position="196"/>
    </location>
</feature>
<feature type="helix" evidence="9">
    <location>
        <begin position="204"/>
        <end position="217"/>
    </location>
</feature>
<feature type="helix" evidence="9">
    <location>
        <begin position="224"/>
        <end position="233"/>
    </location>
</feature>
<feature type="strand" evidence="9">
    <location>
        <begin position="239"/>
        <end position="242"/>
    </location>
</feature>
<feature type="strand" evidence="9">
    <location>
        <begin position="248"/>
        <end position="253"/>
    </location>
</feature>
<feature type="helix" evidence="9">
    <location>
        <begin position="254"/>
        <end position="260"/>
    </location>
</feature>
<feature type="turn" evidence="9">
    <location>
        <begin position="261"/>
        <end position="263"/>
    </location>
</feature>
<feature type="helix" evidence="9">
    <location>
        <begin position="265"/>
        <end position="268"/>
    </location>
</feature>
<feature type="helix" evidence="9">
    <location>
        <begin position="275"/>
        <end position="285"/>
    </location>
</feature>
<feature type="helix" evidence="9">
    <location>
        <begin position="290"/>
        <end position="295"/>
    </location>
</feature>
<feature type="strand" evidence="9">
    <location>
        <begin position="298"/>
        <end position="303"/>
    </location>
</feature>
<feature type="helix" evidence="9">
    <location>
        <begin position="304"/>
        <end position="306"/>
    </location>
</feature>
<feature type="helix" evidence="9">
    <location>
        <begin position="310"/>
        <end position="319"/>
    </location>
</feature>
<feature type="turn" evidence="9">
    <location>
        <begin position="334"/>
        <end position="337"/>
    </location>
</feature>
<feature type="helix" evidence="9">
    <location>
        <begin position="339"/>
        <end position="349"/>
    </location>
</feature>
<feature type="helix" evidence="9">
    <location>
        <begin position="352"/>
        <end position="355"/>
    </location>
</feature>
<feature type="helix" evidence="9">
    <location>
        <begin position="360"/>
        <end position="364"/>
    </location>
</feature>
<name>ACTH_CHICK</name>
<reference key="1">
    <citation type="journal article" date="1993" name="Cell Motil. Cytoskeleton">
        <title>Molecular cloning and expression of the chicken smooth muscle gamma-actin mRNA.</title>
        <authorList>
            <person name="Kovacs A.M."/>
            <person name="Zimmer W.E."/>
        </authorList>
    </citation>
    <scope>NUCLEOTIDE SEQUENCE [MRNA]</scope>
    <source>
        <tissue>Smooth muscle</tissue>
    </source>
</reference>
<reference key="2">
    <citation type="submission" date="1997-07" db="EMBL/GenBank/DDBJ databases">
        <authorList>
            <person name="Kovacs A.M."/>
            <person name="Zimmer W.E."/>
        </authorList>
    </citation>
    <scope>NUCLEOTIDE SEQUENCE [GENOMIC DNA]</scope>
    <source>
        <tissue>Smooth muscle</tissue>
    </source>
</reference>
<reference evidence="8" key="3">
    <citation type="journal article" date="1993" name="Acta Crystallogr. A">
        <title>Refined structure and solvent network of chicken gizzard G-actin DNase 1 complex at 1.8A resolution.</title>
        <authorList>
            <person name="Sasaki K."/>
            <person name="Sakabe K."/>
            <person name="Sakabe N."/>
            <person name="Kondo H."/>
            <person name="Shimomur M."/>
        </authorList>
    </citation>
    <scope>X-RAY CRYSTALLOGRAPHY (1.80 ANGSTROMS) OF 3-376 IN COMPLEX WITH ATP AND MANNOSE</scope>
    <scope>METHYLATION AT HIS-74</scope>
</reference>
<evidence type="ECO:0000250" key="1">
    <source>
        <dbReference type="UniProtKB" id="P62737"/>
    </source>
</evidence>
<evidence type="ECO:0000250" key="2">
    <source>
        <dbReference type="UniProtKB" id="P63267"/>
    </source>
</evidence>
<evidence type="ECO:0000250" key="3">
    <source>
        <dbReference type="UniProtKB" id="P63268"/>
    </source>
</evidence>
<evidence type="ECO:0000250" key="4">
    <source>
        <dbReference type="UniProtKB" id="P68133"/>
    </source>
</evidence>
<evidence type="ECO:0000250" key="5">
    <source>
        <dbReference type="UniProtKB" id="P68137"/>
    </source>
</evidence>
<evidence type="ECO:0000269" key="6">
    <source ref="3"/>
</evidence>
<evidence type="ECO:0000305" key="7"/>
<evidence type="ECO:0007744" key="8">
    <source>
        <dbReference type="PDB" id="3W3D"/>
    </source>
</evidence>
<evidence type="ECO:0007829" key="9">
    <source>
        <dbReference type="PDB" id="3W3D"/>
    </source>
</evidence>
<keyword id="KW-0002">3D-structure</keyword>
<keyword id="KW-0007">Acetylation</keyword>
<keyword id="KW-0067">ATP-binding</keyword>
<keyword id="KW-0963">Cytoplasm</keyword>
<keyword id="KW-0206">Cytoskeleton</keyword>
<keyword id="KW-0378">Hydrolase</keyword>
<keyword id="KW-0488">Methylation</keyword>
<keyword id="KW-0514">Muscle protein</keyword>
<keyword id="KW-0547">Nucleotide-binding</keyword>
<keyword id="KW-0558">Oxidation</keyword>
<keyword id="KW-1185">Reference proteome</keyword>